<feature type="signal peptide" evidence="4">
    <location>
        <begin position="1"/>
        <end position="21"/>
    </location>
</feature>
<feature type="propeptide" id="PRO_0000453230" evidence="3">
    <location>
        <begin position="22"/>
        <end position="174"/>
    </location>
</feature>
<feature type="chain" id="PRO_0000411171" description="Inactive metallocarboxypeptidase ECM14">
    <location>
        <begin position="175"/>
        <end position="592"/>
    </location>
</feature>
<feature type="domain" description="Peptidase M14" evidence="5">
    <location>
        <begin position="202"/>
        <end position="521"/>
    </location>
</feature>
<feature type="region of interest" description="Disordered" evidence="6">
    <location>
        <begin position="170"/>
        <end position="191"/>
    </location>
</feature>
<feature type="region of interest" description="Disordered" evidence="6">
    <location>
        <begin position="542"/>
        <end position="592"/>
    </location>
</feature>
<feature type="compositionally biased region" description="Polar residues" evidence="6">
    <location>
        <begin position="170"/>
        <end position="179"/>
    </location>
</feature>
<feature type="compositionally biased region" description="Acidic residues" evidence="6">
    <location>
        <begin position="548"/>
        <end position="558"/>
    </location>
</feature>
<feature type="compositionally biased region" description="Basic and acidic residues" evidence="6">
    <location>
        <begin position="559"/>
        <end position="575"/>
    </location>
</feature>
<feature type="binding site" evidence="1">
    <location>
        <begin position="264"/>
        <end position="267"/>
    </location>
    <ligand>
        <name>substrate</name>
    </ligand>
</feature>
<feature type="binding site" evidence="5">
    <location>
        <position position="264"/>
    </location>
    <ligand>
        <name>Zn(2+)</name>
        <dbReference type="ChEBI" id="CHEBI:29105"/>
        <note>catalytic</note>
    </ligand>
</feature>
<feature type="binding site" evidence="5">
    <location>
        <position position="267"/>
    </location>
    <ligand>
        <name>Zn(2+)</name>
        <dbReference type="ChEBI" id="CHEBI:29105"/>
        <note>catalytic</note>
    </ligand>
</feature>
<feature type="binding site" evidence="1">
    <location>
        <position position="322"/>
    </location>
    <ligand>
        <name>substrate</name>
    </ligand>
</feature>
<feature type="binding site" evidence="1">
    <location>
        <begin position="339"/>
        <end position="340"/>
    </location>
    <ligand>
        <name>substrate</name>
    </ligand>
</feature>
<feature type="binding site" evidence="5">
    <location>
        <position position="396"/>
    </location>
    <ligand>
        <name>Zn(2+)</name>
        <dbReference type="ChEBI" id="CHEBI:29105"/>
        <note>catalytic</note>
    </ligand>
</feature>
<feature type="binding site" evidence="1">
    <location>
        <begin position="397"/>
        <end position="398"/>
    </location>
    <ligand>
        <name>substrate</name>
    </ligand>
</feature>
<feature type="glycosylation site" description="N-linked (GlcNAc...) asparagine" evidence="4">
    <location>
        <position position="349"/>
    </location>
</feature>
<feature type="disulfide bond" evidence="2">
    <location>
        <begin position="333"/>
        <end position="356"/>
    </location>
</feature>
<dbReference type="EMBL" id="EQ999973">
    <property type="protein sequence ID" value="EEQ83317.1"/>
    <property type="molecule type" value="Genomic_DNA"/>
</dbReference>
<dbReference type="SMR" id="C5G6U8"/>
<dbReference type="STRING" id="559297.C5G6U8"/>
<dbReference type="GlyCosmos" id="C5G6U8">
    <property type="glycosylation" value="1 site, No reported glycans"/>
</dbReference>
<dbReference type="VEuPathDB" id="FungiDB:BDCG_00122"/>
<dbReference type="eggNOG" id="KOG2650">
    <property type="taxonomic scope" value="Eukaryota"/>
</dbReference>
<dbReference type="HOGENOM" id="CLU_019326_1_0_1"/>
<dbReference type="OMA" id="WFYHQLH"/>
<dbReference type="GO" id="GO:0005576">
    <property type="term" value="C:extracellular region"/>
    <property type="evidence" value="ECO:0007669"/>
    <property type="project" value="UniProtKB-SubCell"/>
</dbReference>
<dbReference type="GO" id="GO:0005773">
    <property type="term" value="C:vacuole"/>
    <property type="evidence" value="ECO:0007669"/>
    <property type="project" value="UniProtKB-SubCell"/>
</dbReference>
<dbReference type="GO" id="GO:0008270">
    <property type="term" value="F:zinc ion binding"/>
    <property type="evidence" value="ECO:0007669"/>
    <property type="project" value="InterPro"/>
</dbReference>
<dbReference type="GO" id="GO:0071555">
    <property type="term" value="P:cell wall organization"/>
    <property type="evidence" value="ECO:0007669"/>
    <property type="project" value="UniProtKB-KW"/>
</dbReference>
<dbReference type="GO" id="GO:0006508">
    <property type="term" value="P:proteolysis"/>
    <property type="evidence" value="ECO:0007669"/>
    <property type="project" value="InterPro"/>
</dbReference>
<dbReference type="CDD" id="cd03860">
    <property type="entry name" value="M14_CP_A-B_like"/>
    <property type="match status" value="1"/>
</dbReference>
<dbReference type="FunFam" id="3.40.630.10:FF:000060">
    <property type="entry name" value="Putative metallocarboxypeptidase ecm14"/>
    <property type="match status" value="1"/>
</dbReference>
<dbReference type="Gene3D" id="3.40.630.10">
    <property type="entry name" value="Zn peptidases"/>
    <property type="match status" value="1"/>
</dbReference>
<dbReference type="InterPro" id="IPR000834">
    <property type="entry name" value="Peptidase_M14"/>
</dbReference>
<dbReference type="PANTHER" id="PTHR11705:SF147">
    <property type="entry name" value="INACTIVE METALLOCARBOXYPEPTIDASE ECM14"/>
    <property type="match status" value="1"/>
</dbReference>
<dbReference type="PANTHER" id="PTHR11705">
    <property type="entry name" value="PROTEASE FAMILY M14 CARBOXYPEPTIDASE A,B"/>
    <property type="match status" value="1"/>
</dbReference>
<dbReference type="Pfam" id="PF00246">
    <property type="entry name" value="Peptidase_M14"/>
    <property type="match status" value="1"/>
</dbReference>
<dbReference type="PRINTS" id="PR00765">
    <property type="entry name" value="CRBOXYPTASEA"/>
</dbReference>
<dbReference type="SMART" id="SM00631">
    <property type="entry name" value="Zn_pept"/>
    <property type="match status" value="1"/>
</dbReference>
<dbReference type="SUPFAM" id="SSF53187">
    <property type="entry name" value="Zn-dependent exopeptidases"/>
    <property type="match status" value="1"/>
</dbReference>
<dbReference type="PROSITE" id="PS00132">
    <property type="entry name" value="CARBOXYPEPT_ZN_1"/>
    <property type="match status" value="1"/>
</dbReference>
<dbReference type="PROSITE" id="PS52035">
    <property type="entry name" value="PEPTIDASE_M14"/>
    <property type="match status" value="1"/>
</dbReference>
<evidence type="ECO:0000250" key="1">
    <source>
        <dbReference type="UniProtKB" id="P00730"/>
    </source>
</evidence>
<evidence type="ECO:0000250" key="2">
    <source>
        <dbReference type="UniProtKB" id="P15085"/>
    </source>
</evidence>
<evidence type="ECO:0000250" key="3">
    <source>
        <dbReference type="UniProtKB" id="P38836"/>
    </source>
</evidence>
<evidence type="ECO:0000255" key="4"/>
<evidence type="ECO:0000255" key="5">
    <source>
        <dbReference type="PROSITE-ProRule" id="PRU01379"/>
    </source>
</evidence>
<evidence type="ECO:0000256" key="6">
    <source>
        <dbReference type="SAM" id="MobiDB-lite"/>
    </source>
</evidence>
<evidence type="ECO:0000305" key="7"/>
<accession>C5G6U8</accession>
<name>ECM14_AJEDR</name>
<reference key="1">
    <citation type="journal article" date="2015" name="PLoS Genet.">
        <title>The dynamic genome and transcriptome of the human fungal pathogen Blastomyces and close relative Emmonsia.</title>
        <authorList>
            <person name="Munoz J.F."/>
            <person name="Gauthier G.M."/>
            <person name="Desjardins C.A."/>
            <person name="Gallo J.E."/>
            <person name="Holder J."/>
            <person name="Sullivan T.D."/>
            <person name="Marty A.J."/>
            <person name="Carmen J.C."/>
            <person name="Chen Z."/>
            <person name="Ding L."/>
            <person name="Gujja S."/>
            <person name="Magrini V."/>
            <person name="Misas E."/>
            <person name="Mitreva M."/>
            <person name="Priest M."/>
            <person name="Saif S."/>
            <person name="Whiston E.A."/>
            <person name="Young S."/>
            <person name="Zeng Q."/>
            <person name="Goldman W.E."/>
            <person name="Mardis E.R."/>
            <person name="Taylor J.W."/>
            <person name="McEwen J.G."/>
            <person name="Clay O.K."/>
            <person name="Klein B.S."/>
            <person name="Cuomo C.A."/>
        </authorList>
    </citation>
    <scope>NUCLEOTIDE SEQUENCE [LARGE SCALE GENOMIC DNA]</scope>
    <source>
        <strain>ER-3 / ATCC MYA-2586</strain>
    </source>
</reference>
<keyword id="KW-0961">Cell wall biogenesis/degradation</keyword>
<keyword id="KW-1015">Disulfide bond</keyword>
<keyword id="KW-0325">Glycoprotein</keyword>
<keyword id="KW-0479">Metal-binding</keyword>
<keyword id="KW-0964">Secreted</keyword>
<keyword id="KW-0732">Signal</keyword>
<keyword id="KW-0926">Vacuole</keyword>
<keyword id="KW-0862">Zinc</keyword>
<comment type="function">
    <text evidence="3">Inactive carboxypeptidase that may play a role in cell wall organization and biogenesis.</text>
</comment>
<comment type="cofactor">
    <cofactor evidence="1">
        <name>Zn(2+)</name>
        <dbReference type="ChEBI" id="CHEBI:29105"/>
    </cofactor>
    <text evidence="1">Binds 1 zinc ion per subunit.</text>
</comment>
<comment type="subcellular location">
    <subcellularLocation>
        <location evidence="3">Vacuole</location>
    </subcellularLocation>
    <subcellularLocation>
        <location evidence="3">Secreted</location>
    </subcellularLocation>
</comment>
<comment type="similarity">
    <text evidence="7">Belongs to the peptidase M14 family.</text>
</comment>
<comment type="caution">
    <text evidence="3">Lacks the conserved Glu residue in position 487 essential for carbopeptidase activity. The mature form lacks catalytic activity towards synthetic peptide substrates.</text>
</comment>
<protein>
    <recommendedName>
        <fullName evidence="7">Inactive metallocarboxypeptidase ECM14</fullName>
    </recommendedName>
</protein>
<gene>
    <name type="primary">ECM14</name>
    <name type="ORF">BDCG_00122</name>
</gene>
<proteinExistence type="inferred from homology"/>
<sequence>MRQFTHGTLLAILALANTISAIPSFSANNYPAHPAEPLALFAQSQPQAPLGLWTRLRNSVIERLWGVPPQQRNHRGGNKQYPFYSAPASLQARYSDDVVLRFRLQTADEVKALVEASNILFLDVWASTDEWVDIRLAKDVVPSLLGLLPKSLQTAHVPLIHDLPQTVYESYPSSSQRPTDNGRGFLPSRESSSDVTNIFFEDYQPLSVIGPWMRLLASMFPSHVQLISIGSSFEGRDIPALRVGVRPANDPKPRKTVIIGGGSHAREWIGVSTVNYVAYSLITTYGKSTPISTLLEQFDFIFIPTINPDGYVHTWETDRLWRKNRQETSLPFCPGVDLDRTWGFEWNGNATGDNPCSESYGGDEPFAGTEARQLAGWVKEQTEQHNVKFVAYLDLHSYSQQVLYPYSYSCLPRPPNLENLEELAMGIAKAIRLTNRQSYTVSSACQGFTASQKKVKLDTFPRMESTGGSALDWFYNDVGVKYSYQLKLRDKGSYGFLLPRENIVPTGKEVFNAVMVLAKFLLGSDGFEGLNWEAEFQRLNEADKPILDDGDDDEEEDGQDKKDDSWIPDEYKNDNDHDDDDDGWGLRRRRKR</sequence>
<organism>
    <name type="scientific">Ajellomyces dermatitidis (strain ER-3 / ATCC MYA-2586)</name>
    <name type="common">Blastomyces dermatitidis</name>
    <dbReference type="NCBI Taxonomy" id="559297"/>
    <lineage>
        <taxon>Eukaryota</taxon>
        <taxon>Fungi</taxon>
        <taxon>Dikarya</taxon>
        <taxon>Ascomycota</taxon>
        <taxon>Pezizomycotina</taxon>
        <taxon>Eurotiomycetes</taxon>
        <taxon>Eurotiomycetidae</taxon>
        <taxon>Onygenales</taxon>
        <taxon>Ajellomycetaceae</taxon>
        <taxon>Blastomyces</taxon>
    </lineage>
</organism>